<reference key="1">
    <citation type="submission" date="2005-07" db="EMBL/GenBank/DDBJ databases">
        <title>Complete sequence of Synechococcus sp. CC9605.</title>
        <authorList>
            <consortium name="US DOE Joint Genome Institute"/>
            <person name="Copeland A."/>
            <person name="Lucas S."/>
            <person name="Lapidus A."/>
            <person name="Barry K."/>
            <person name="Detter J.C."/>
            <person name="Glavina T."/>
            <person name="Hammon N."/>
            <person name="Israni S."/>
            <person name="Pitluck S."/>
            <person name="Schmutz J."/>
            <person name="Martinez M."/>
            <person name="Larimer F."/>
            <person name="Land M."/>
            <person name="Kyrpides N."/>
            <person name="Ivanova N."/>
            <person name="Richardson P."/>
        </authorList>
    </citation>
    <scope>NUCLEOTIDE SEQUENCE [LARGE SCALE GENOMIC DNA]</scope>
    <source>
        <strain>CC9605</strain>
    </source>
</reference>
<sequence length="152" mass="16802">MPKRVQIVLNEDILSLGMDGDLVEVAPGYARNFLLPFGKAVPLTPAVMKQVEHRRAKEAERQAALKQEAVDFKTALSTIGRFTVKKQTGEDNVLFGTVTNGDVAEAIETATKKEIDRRDIVVPEIHRTGKYTVTVKLHSEVTAEINLEVVGY</sequence>
<name>RL9_SYNSC</name>
<feature type="chain" id="PRO_0000236601" description="Large ribosomal subunit protein bL9">
    <location>
        <begin position="1"/>
        <end position="152"/>
    </location>
</feature>
<proteinExistence type="inferred from homology"/>
<protein>
    <recommendedName>
        <fullName evidence="1">Large ribosomal subunit protein bL9</fullName>
    </recommendedName>
    <alternativeName>
        <fullName evidence="2">50S ribosomal protein L9</fullName>
    </alternativeName>
</protein>
<keyword id="KW-0687">Ribonucleoprotein</keyword>
<keyword id="KW-0689">Ribosomal protein</keyword>
<keyword id="KW-0694">RNA-binding</keyword>
<keyword id="KW-0699">rRNA-binding</keyword>
<dbReference type="EMBL" id="CP000110">
    <property type="protein sequence ID" value="ABB36270.1"/>
    <property type="molecule type" value="Genomic_DNA"/>
</dbReference>
<dbReference type="RefSeq" id="WP_011365465.1">
    <property type="nucleotide sequence ID" value="NC_007516.1"/>
</dbReference>
<dbReference type="SMR" id="Q3AGL2"/>
<dbReference type="STRING" id="110662.Syncc9605_2542"/>
<dbReference type="KEGG" id="syd:Syncc9605_2542"/>
<dbReference type="eggNOG" id="COG0359">
    <property type="taxonomic scope" value="Bacteria"/>
</dbReference>
<dbReference type="HOGENOM" id="CLU_078938_5_1_3"/>
<dbReference type="OrthoDB" id="9788336at2"/>
<dbReference type="GO" id="GO:1990904">
    <property type="term" value="C:ribonucleoprotein complex"/>
    <property type="evidence" value="ECO:0007669"/>
    <property type="project" value="UniProtKB-KW"/>
</dbReference>
<dbReference type="GO" id="GO:0005840">
    <property type="term" value="C:ribosome"/>
    <property type="evidence" value="ECO:0007669"/>
    <property type="project" value="UniProtKB-KW"/>
</dbReference>
<dbReference type="GO" id="GO:0019843">
    <property type="term" value="F:rRNA binding"/>
    <property type="evidence" value="ECO:0007669"/>
    <property type="project" value="UniProtKB-UniRule"/>
</dbReference>
<dbReference type="GO" id="GO:0003735">
    <property type="term" value="F:structural constituent of ribosome"/>
    <property type="evidence" value="ECO:0007669"/>
    <property type="project" value="InterPro"/>
</dbReference>
<dbReference type="GO" id="GO:0006412">
    <property type="term" value="P:translation"/>
    <property type="evidence" value="ECO:0007669"/>
    <property type="project" value="UniProtKB-UniRule"/>
</dbReference>
<dbReference type="Gene3D" id="3.10.430.100">
    <property type="entry name" value="Ribosomal protein L9, C-terminal domain"/>
    <property type="match status" value="1"/>
</dbReference>
<dbReference type="Gene3D" id="3.40.5.10">
    <property type="entry name" value="Ribosomal protein L9, N-terminal domain"/>
    <property type="match status" value="1"/>
</dbReference>
<dbReference type="HAMAP" id="MF_00503">
    <property type="entry name" value="Ribosomal_bL9"/>
    <property type="match status" value="1"/>
</dbReference>
<dbReference type="InterPro" id="IPR000244">
    <property type="entry name" value="Ribosomal_bL9"/>
</dbReference>
<dbReference type="InterPro" id="IPR009027">
    <property type="entry name" value="Ribosomal_bL9/RNase_H1_N"/>
</dbReference>
<dbReference type="InterPro" id="IPR020594">
    <property type="entry name" value="Ribosomal_bL9_bac/chp"/>
</dbReference>
<dbReference type="InterPro" id="IPR020069">
    <property type="entry name" value="Ribosomal_bL9_C"/>
</dbReference>
<dbReference type="InterPro" id="IPR036791">
    <property type="entry name" value="Ribosomal_bL9_C_sf"/>
</dbReference>
<dbReference type="InterPro" id="IPR020070">
    <property type="entry name" value="Ribosomal_bL9_N"/>
</dbReference>
<dbReference type="InterPro" id="IPR036935">
    <property type="entry name" value="Ribosomal_bL9_N_sf"/>
</dbReference>
<dbReference type="NCBIfam" id="TIGR00158">
    <property type="entry name" value="L9"/>
    <property type="match status" value="1"/>
</dbReference>
<dbReference type="PANTHER" id="PTHR21368">
    <property type="entry name" value="50S RIBOSOMAL PROTEIN L9"/>
    <property type="match status" value="1"/>
</dbReference>
<dbReference type="Pfam" id="PF03948">
    <property type="entry name" value="Ribosomal_L9_C"/>
    <property type="match status" value="1"/>
</dbReference>
<dbReference type="Pfam" id="PF01281">
    <property type="entry name" value="Ribosomal_L9_N"/>
    <property type="match status" value="1"/>
</dbReference>
<dbReference type="SUPFAM" id="SSF55658">
    <property type="entry name" value="L9 N-domain-like"/>
    <property type="match status" value="1"/>
</dbReference>
<dbReference type="SUPFAM" id="SSF55653">
    <property type="entry name" value="Ribosomal protein L9 C-domain"/>
    <property type="match status" value="1"/>
</dbReference>
<dbReference type="PROSITE" id="PS00651">
    <property type="entry name" value="RIBOSOMAL_L9"/>
    <property type="match status" value="1"/>
</dbReference>
<gene>
    <name evidence="1" type="primary">rplI</name>
    <name evidence="1" type="synonym">rpl9</name>
    <name type="ordered locus">Syncc9605_2542</name>
</gene>
<comment type="function">
    <text evidence="1">Binds to the 23S rRNA.</text>
</comment>
<comment type="similarity">
    <text evidence="1">Belongs to the bacterial ribosomal protein bL9 family.</text>
</comment>
<accession>Q3AGL2</accession>
<evidence type="ECO:0000255" key="1">
    <source>
        <dbReference type="HAMAP-Rule" id="MF_00503"/>
    </source>
</evidence>
<evidence type="ECO:0000305" key="2"/>
<organism>
    <name type="scientific">Synechococcus sp. (strain CC9605)</name>
    <dbReference type="NCBI Taxonomy" id="110662"/>
    <lineage>
        <taxon>Bacteria</taxon>
        <taxon>Bacillati</taxon>
        <taxon>Cyanobacteriota</taxon>
        <taxon>Cyanophyceae</taxon>
        <taxon>Synechococcales</taxon>
        <taxon>Synechococcaceae</taxon>
        <taxon>Synechococcus</taxon>
    </lineage>
</organism>